<comment type="function">
    <text evidence="1">A core subunit of photosystem II (PSII), probably helps stabilize the reaction center.</text>
</comment>
<comment type="subunit">
    <text evidence="1">PSII is composed of 1 copy each of membrane proteins PsbA, PsbB, PsbC, PsbD, PsbE, PsbF, PsbH, PsbI, PsbJ, PsbK, PsbL, PsbM, PsbT, PsbX, PsbY, PsbZ, Psb30/Ycf12, peripheral proteins of the oxygen-evolving complex and a large number of cofactors. It forms dimeric complexes.</text>
</comment>
<comment type="subcellular location">
    <subcellularLocation>
        <location evidence="1">Plastid</location>
        <location evidence="1">Chloroplast thylakoid membrane</location>
        <topology evidence="1">Single-pass membrane protein</topology>
    </subcellularLocation>
</comment>
<comment type="similarity">
    <text evidence="1">Belongs to the Psb30/Ycf12 family.</text>
</comment>
<comment type="sequence caution" evidence="2">
    <conflict type="erroneous initiation">
        <sequence resource="EMBL-CDS" id="BAA57940"/>
    </conflict>
    <text>Extended N-terminus.</text>
</comment>
<protein>
    <recommendedName>
        <fullName evidence="1">Photosystem II reaction center protein Psb30</fullName>
    </recommendedName>
    <alternativeName>
        <fullName evidence="1">Photosystem II reaction center protein Ycf12</fullName>
    </alternativeName>
</protein>
<sequence>MNLEIVFQLTALLFVVAAGPLVIVLLASRGGNL</sequence>
<dbReference type="EMBL" id="AB001684">
    <property type="protein sequence ID" value="BAA57940.1"/>
    <property type="status" value="ALT_INIT"/>
    <property type="molecule type" value="Genomic_DNA"/>
</dbReference>
<dbReference type="PIR" id="T07292">
    <property type="entry name" value="T07292"/>
</dbReference>
<dbReference type="RefSeq" id="NP_045864.1">
    <property type="nucleotide sequence ID" value="NC_001865.1"/>
</dbReference>
<dbReference type="SMR" id="P56328"/>
<dbReference type="GeneID" id="809114"/>
<dbReference type="GO" id="GO:0009535">
    <property type="term" value="C:chloroplast thylakoid membrane"/>
    <property type="evidence" value="ECO:0007669"/>
    <property type="project" value="UniProtKB-SubCell"/>
</dbReference>
<dbReference type="GO" id="GO:0009523">
    <property type="term" value="C:photosystem II"/>
    <property type="evidence" value="ECO:0007669"/>
    <property type="project" value="UniProtKB-KW"/>
</dbReference>
<dbReference type="GO" id="GO:0015979">
    <property type="term" value="P:photosynthesis"/>
    <property type="evidence" value="ECO:0007669"/>
    <property type="project" value="UniProtKB-KW"/>
</dbReference>
<dbReference type="HAMAP" id="MF_01329">
    <property type="entry name" value="PSII_Psb30_Ycf12"/>
    <property type="match status" value="1"/>
</dbReference>
<dbReference type="InterPro" id="IPR010284">
    <property type="entry name" value="PSII_Ycf12_core-subunit"/>
</dbReference>
<dbReference type="NCBIfam" id="NF010239">
    <property type="entry name" value="PRK13686.1"/>
    <property type="match status" value="1"/>
</dbReference>
<dbReference type="Pfam" id="PF05969">
    <property type="entry name" value="PSII_Ycf12"/>
    <property type="match status" value="1"/>
</dbReference>
<name>PSB30_CHLVU</name>
<accession>P56328</accession>
<evidence type="ECO:0000255" key="1">
    <source>
        <dbReference type="HAMAP-Rule" id="MF_01329"/>
    </source>
</evidence>
<evidence type="ECO:0000305" key="2"/>
<feature type="chain" id="PRO_0000059014" description="Photosystem II reaction center protein Psb30">
    <location>
        <begin position="1"/>
        <end position="33"/>
    </location>
</feature>
<feature type="transmembrane region" description="Helical" evidence="1">
    <location>
        <begin position="5"/>
        <end position="25"/>
    </location>
</feature>
<reference key="1">
    <citation type="journal article" date="1997" name="Proc. Natl. Acad. Sci. U.S.A.">
        <title>Complete nucleotide sequence of the chloroplast genome from the green alga Chlorella vulgaris: the existence of genes possibly involved in chloroplast division.</title>
        <authorList>
            <person name="Wakasugi T."/>
            <person name="Nagai T."/>
            <person name="Kapoor M."/>
            <person name="Sugita M."/>
            <person name="Ito M."/>
            <person name="Ito S."/>
            <person name="Tsudzuki J."/>
            <person name="Nakashima K."/>
            <person name="Tsudzuki T."/>
            <person name="Suzuki Y."/>
            <person name="Hamada A."/>
            <person name="Ohta T."/>
            <person name="Inamura A."/>
            <person name="Yoshinaga K."/>
            <person name="Sugiura M."/>
        </authorList>
    </citation>
    <scope>NUCLEOTIDE SEQUENCE [LARGE SCALE GENOMIC DNA]</scope>
    <source>
        <strain>IAM C-27 / Tamiya</strain>
    </source>
</reference>
<organism>
    <name type="scientific">Chlorella vulgaris</name>
    <name type="common">Green alga</name>
    <dbReference type="NCBI Taxonomy" id="3077"/>
    <lineage>
        <taxon>Eukaryota</taxon>
        <taxon>Viridiplantae</taxon>
        <taxon>Chlorophyta</taxon>
        <taxon>core chlorophytes</taxon>
        <taxon>Trebouxiophyceae</taxon>
        <taxon>Chlorellales</taxon>
        <taxon>Chlorellaceae</taxon>
        <taxon>Chlorella clade</taxon>
        <taxon>Chlorella</taxon>
    </lineage>
</organism>
<keyword id="KW-0150">Chloroplast</keyword>
<keyword id="KW-0472">Membrane</keyword>
<keyword id="KW-0602">Photosynthesis</keyword>
<keyword id="KW-0604">Photosystem II</keyword>
<keyword id="KW-0934">Plastid</keyword>
<keyword id="KW-0793">Thylakoid</keyword>
<keyword id="KW-0812">Transmembrane</keyword>
<keyword id="KW-1133">Transmembrane helix</keyword>
<gene>
    <name evidence="1" type="primary">psb30</name>
    <name evidence="1" type="synonym">ycf12</name>
</gene>
<proteinExistence type="inferred from homology"/>
<geneLocation type="chloroplast"/>